<evidence type="ECO:0000255" key="1">
    <source>
        <dbReference type="HAMAP-Rule" id="MF_00303"/>
    </source>
</evidence>
<reference key="1">
    <citation type="submission" date="2008-01" db="EMBL/GenBank/DDBJ databases">
        <title>Complete sequence of Pseudomonas putida GB-1.</title>
        <authorList>
            <consortium name="US DOE Joint Genome Institute"/>
            <person name="Copeland A."/>
            <person name="Lucas S."/>
            <person name="Lapidus A."/>
            <person name="Barry K."/>
            <person name="Glavina del Rio T."/>
            <person name="Dalin E."/>
            <person name="Tice H."/>
            <person name="Pitluck S."/>
            <person name="Bruce D."/>
            <person name="Goodwin L."/>
            <person name="Chertkov O."/>
            <person name="Brettin T."/>
            <person name="Detter J.C."/>
            <person name="Han C."/>
            <person name="Kuske C.R."/>
            <person name="Schmutz J."/>
            <person name="Larimer F."/>
            <person name="Land M."/>
            <person name="Hauser L."/>
            <person name="Kyrpides N."/>
            <person name="Kim E."/>
            <person name="McCarthy J.K."/>
            <person name="Richardson P."/>
        </authorList>
    </citation>
    <scope>NUCLEOTIDE SEQUENCE [LARGE SCALE GENOMIC DNA]</scope>
    <source>
        <strain>GB-1</strain>
    </source>
</reference>
<keyword id="KW-0131">Cell cycle</keyword>
<keyword id="KW-0132">Cell division</keyword>
<keyword id="KW-0143">Chaperone</keyword>
<keyword id="KW-0963">Cytoplasm</keyword>
<keyword id="KW-0413">Isomerase</keyword>
<keyword id="KW-0697">Rotamase</keyword>
<accession>B0KJG5</accession>
<feature type="chain" id="PRO_1000079050" description="Trigger factor">
    <location>
        <begin position="1"/>
        <end position="437"/>
    </location>
</feature>
<feature type="domain" description="PPIase FKBP-type" evidence="1">
    <location>
        <begin position="161"/>
        <end position="246"/>
    </location>
</feature>
<organism>
    <name type="scientific">Pseudomonas putida (strain GB-1)</name>
    <dbReference type="NCBI Taxonomy" id="76869"/>
    <lineage>
        <taxon>Bacteria</taxon>
        <taxon>Pseudomonadati</taxon>
        <taxon>Pseudomonadota</taxon>
        <taxon>Gammaproteobacteria</taxon>
        <taxon>Pseudomonadales</taxon>
        <taxon>Pseudomonadaceae</taxon>
        <taxon>Pseudomonas</taxon>
    </lineage>
</organism>
<proteinExistence type="inferred from homology"/>
<protein>
    <recommendedName>
        <fullName evidence="1">Trigger factor</fullName>
        <shortName evidence="1">TF</shortName>
        <ecNumber evidence="1">5.2.1.8</ecNumber>
    </recommendedName>
    <alternativeName>
        <fullName evidence="1">PPIase</fullName>
    </alternativeName>
</protein>
<gene>
    <name evidence="1" type="primary">tig</name>
    <name type="ordered locus">PputGB1_1901</name>
</gene>
<name>TIG_PSEPG</name>
<sequence length="437" mass="48531">MQVSVENTSALERRMTIAVPAERVENEVNKRLQQTAKRAKIAGFRPGKVPMNVIRQRFEADARQEAFGDLVQASFYEAIVEQKLNPAGAPAVEPKSFEKGKDLEFVAIFEVFPEFTVSGLESINVERLSAEVADADLDNMLEVLRKQNTRFEAVERAAQNDDQVNIDFVGKVDGEVFAGGSAKGTQLVLGSGRMIPGFEDGLVGAKAGEERVVNVTFPEDYQNLDLAGKAAEFTITVNSVSAPVLPELNEEFFAQFGIKESTLEGFRAEVRKNMERELRQAIKTKVKNQVMDGLLAANPIEVPKALLENEVNRLRVQAVQQFGGNIKPEQLPVELFEEQAKRRVVLGLIVAEVVKQFELKPDDAKVREMIEEMASAYQEPEQVIAWYYKNDQQLNEVRSVVLEEQVVDTVLQKATVTDKSVSYEDAVKPAEAPAAAE</sequence>
<comment type="function">
    <text evidence="1">Involved in protein export. Acts as a chaperone by maintaining the newly synthesized protein in an open conformation. Functions as a peptidyl-prolyl cis-trans isomerase.</text>
</comment>
<comment type="catalytic activity">
    <reaction evidence="1">
        <text>[protein]-peptidylproline (omega=180) = [protein]-peptidylproline (omega=0)</text>
        <dbReference type="Rhea" id="RHEA:16237"/>
        <dbReference type="Rhea" id="RHEA-COMP:10747"/>
        <dbReference type="Rhea" id="RHEA-COMP:10748"/>
        <dbReference type="ChEBI" id="CHEBI:83833"/>
        <dbReference type="ChEBI" id="CHEBI:83834"/>
        <dbReference type="EC" id="5.2.1.8"/>
    </reaction>
</comment>
<comment type="subcellular location">
    <subcellularLocation>
        <location>Cytoplasm</location>
    </subcellularLocation>
    <text evidence="1">About half TF is bound to the ribosome near the polypeptide exit tunnel while the other half is free in the cytoplasm.</text>
</comment>
<comment type="domain">
    <text evidence="1">Consists of 3 domains; the N-terminus binds the ribosome, the middle domain has PPIase activity, while the C-terminus has intrinsic chaperone activity on its own.</text>
</comment>
<comment type="similarity">
    <text evidence="1">Belongs to the FKBP-type PPIase family. Tig subfamily.</text>
</comment>
<dbReference type="EC" id="5.2.1.8" evidence="1"/>
<dbReference type="EMBL" id="CP000926">
    <property type="protein sequence ID" value="ABY97804.1"/>
    <property type="molecule type" value="Genomic_DNA"/>
</dbReference>
<dbReference type="RefSeq" id="WP_012271561.1">
    <property type="nucleotide sequence ID" value="NC_010322.1"/>
</dbReference>
<dbReference type="SMR" id="B0KJG5"/>
<dbReference type="KEGG" id="ppg:PputGB1_1901"/>
<dbReference type="eggNOG" id="COG0544">
    <property type="taxonomic scope" value="Bacteria"/>
</dbReference>
<dbReference type="HOGENOM" id="CLU_033058_2_0_6"/>
<dbReference type="Proteomes" id="UP000002157">
    <property type="component" value="Chromosome"/>
</dbReference>
<dbReference type="GO" id="GO:0005737">
    <property type="term" value="C:cytoplasm"/>
    <property type="evidence" value="ECO:0007669"/>
    <property type="project" value="UniProtKB-SubCell"/>
</dbReference>
<dbReference type="GO" id="GO:0003755">
    <property type="term" value="F:peptidyl-prolyl cis-trans isomerase activity"/>
    <property type="evidence" value="ECO:0007669"/>
    <property type="project" value="UniProtKB-UniRule"/>
</dbReference>
<dbReference type="GO" id="GO:0044183">
    <property type="term" value="F:protein folding chaperone"/>
    <property type="evidence" value="ECO:0007669"/>
    <property type="project" value="TreeGrafter"/>
</dbReference>
<dbReference type="GO" id="GO:0043022">
    <property type="term" value="F:ribosome binding"/>
    <property type="evidence" value="ECO:0007669"/>
    <property type="project" value="TreeGrafter"/>
</dbReference>
<dbReference type="GO" id="GO:0051083">
    <property type="term" value="P:'de novo' cotranslational protein folding"/>
    <property type="evidence" value="ECO:0007669"/>
    <property type="project" value="TreeGrafter"/>
</dbReference>
<dbReference type="GO" id="GO:0051301">
    <property type="term" value="P:cell division"/>
    <property type="evidence" value="ECO:0007669"/>
    <property type="project" value="UniProtKB-KW"/>
</dbReference>
<dbReference type="GO" id="GO:0061077">
    <property type="term" value="P:chaperone-mediated protein folding"/>
    <property type="evidence" value="ECO:0007669"/>
    <property type="project" value="TreeGrafter"/>
</dbReference>
<dbReference type="GO" id="GO:0015031">
    <property type="term" value="P:protein transport"/>
    <property type="evidence" value="ECO:0007669"/>
    <property type="project" value="UniProtKB-UniRule"/>
</dbReference>
<dbReference type="GO" id="GO:0043335">
    <property type="term" value="P:protein unfolding"/>
    <property type="evidence" value="ECO:0007669"/>
    <property type="project" value="TreeGrafter"/>
</dbReference>
<dbReference type="FunFam" id="3.10.50.40:FF:000001">
    <property type="entry name" value="Trigger factor"/>
    <property type="match status" value="1"/>
</dbReference>
<dbReference type="Gene3D" id="3.10.50.40">
    <property type="match status" value="1"/>
</dbReference>
<dbReference type="Gene3D" id="3.30.70.1050">
    <property type="entry name" value="Trigger factor ribosome-binding domain"/>
    <property type="match status" value="1"/>
</dbReference>
<dbReference type="Gene3D" id="1.10.3120.10">
    <property type="entry name" value="Trigger factor, C-terminal domain"/>
    <property type="match status" value="1"/>
</dbReference>
<dbReference type="HAMAP" id="MF_00303">
    <property type="entry name" value="Trigger_factor_Tig"/>
    <property type="match status" value="1"/>
</dbReference>
<dbReference type="InterPro" id="IPR046357">
    <property type="entry name" value="PPIase_dom_sf"/>
</dbReference>
<dbReference type="InterPro" id="IPR001179">
    <property type="entry name" value="PPIase_FKBP_dom"/>
</dbReference>
<dbReference type="InterPro" id="IPR005215">
    <property type="entry name" value="Trig_fac"/>
</dbReference>
<dbReference type="InterPro" id="IPR008880">
    <property type="entry name" value="Trigger_fac_C"/>
</dbReference>
<dbReference type="InterPro" id="IPR037041">
    <property type="entry name" value="Trigger_fac_C_sf"/>
</dbReference>
<dbReference type="InterPro" id="IPR008881">
    <property type="entry name" value="Trigger_fac_ribosome-bd_bac"/>
</dbReference>
<dbReference type="InterPro" id="IPR036611">
    <property type="entry name" value="Trigger_fac_ribosome-bd_sf"/>
</dbReference>
<dbReference type="InterPro" id="IPR027304">
    <property type="entry name" value="Trigger_fact/SurA_dom_sf"/>
</dbReference>
<dbReference type="NCBIfam" id="TIGR00115">
    <property type="entry name" value="tig"/>
    <property type="match status" value="1"/>
</dbReference>
<dbReference type="PANTHER" id="PTHR30560">
    <property type="entry name" value="TRIGGER FACTOR CHAPERONE AND PEPTIDYL-PROLYL CIS/TRANS ISOMERASE"/>
    <property type="match status" value="1"/>
</dbReference>
<dbReference type="PANTHER" id="PTHR30560:SF3">
    <property type="entry name" value="TRIGGER FACTOR-LIKE PROTEIN TIG, CHLOROPLASTIC"/>
    <property type="match status" value="1"/>
</dbReference>
<dbReference type="Pfam" id="PF00254">
    <property type="entry name" value="FKBP_C"/>
    <property type="match status" value="1"/>
</dbReference>
<dbReference type="Pfam" id="PF05698">
    <property type="entry name" value="Trigger_C"/>
    <property type="match status" value="1"/>
</dbReference>
<dbReference type="Pfam" id="PF05697">
    <property type="entry name" value="Trigger_N"/>
    <property type="match status" value="1"/>
</dbReference>
<dbReference type="PIRSF" id="PIRSF003095">
    <property type="entry name" value="Trigger_factor"/>
    <property type="match status" value="1"/>
</dbReference>
<dbReference type="SUPFAM" id="SSF54534">
    <property type="entry name" value="FKBP-like"/>
    <property type="match status" value="1"/>
</dbReference>
<dbReference type="SUPFAM" id="SSF109998">
    <property type="entry name" value="Triger factor/SurA peptide-binding domain-like"/>
    <property type="match status" value="1"/>
</dbReference>
<dbReference type="SUPFAM" id="SSF102735">
    <property type="entry name" value="Trigger factor ribosome-binding domain"/>
    <property type="match status" value="1"/>
</dbReference>
<dbReference type="PROSITE" id="PS50059">
    <property type="entry name" value="FKBP_PPIASE"/>
    <property type="match status" value="1"/>
</dbReference>